<gene>
    <name evidence="1" type="primary">ung</name>
    <name type="ordered locus">BCG9842_B5430</name>
</gene>
<protein>
    <recommendedName>
        <fullName evidence="1">Uracil-DNA glycosylase</fullName>
        <shortName evidence="1">UDG</shortName>
        <ecNumber evidence="1">3.2.2.27</ecNumber>
    </recommendedName>
</protein>
<feature type="chain" id="PRO_1000199768" description="Uracil-DNA glycosylase">
    <location>
        <begin position="1"/>
        <end position="225"/>
    </location>
</feature>
<feature type="active site" description="Proton acceptor" evidence="1">
    <location>
        <position position="65"/>
    </location>
</feature>
<proteinExistence type="inferred from homology"/>
<organism>
    <name type="scientific">Bacillus cereus (strain G9842)</name>
    <dbReference type="NCBI Taxonomy" id="405531"/>
    <lineage>
        <taxon>Bacteria</taxon>
        <taxon>Bacillati</taxon>
        <taxon>Bacillota</taxon>
        <taxon>Bacilli</taxon>
        <taxon>Bacillales</taxon>
        <taxon>Bacillaceae</taxon>
        <taxon>Bacillus</taxon>
        <taxon>Bacillus cereus group</taxon>
    </lineage>
</organism>
<accession>B7IRS8</accession>
<keyword id="KW-0963">Cytoplasm</keyword>
<keyword id="KW-0227">DNA damage</keyword>
<keyword id="KW-0234">DNA repair</keyword>
<keyword id="KW-0378">Hydrolase</keyword>
<evidence type="ECO:0000255" key="1">
    <source>
        <dbReference type="HAMAP-Rule" id="MF_00148"/>
    </source>
</evidence>
<reference key="1">
    <citation type="submission" date="2008-10" db="EMBL/GenBank/DDBJ databases">
        <title>Genome sequence of Bacillus cereus G9842.</title>
        <authorList>
            <person name="Dodson R.J."/>
            <person name="Durkin A.S."/>
            <person name="Rosovitz M.J."/>
            <person name="Rasko D.A."/>
            <person name="Hoffmaster A."/>
            <person name="Ravel J."/>
            <person name="Sutton G."/>
        </authorList>
    </citation>
    <scope>NUCLEOTIDE SEQUENCE [LARGE SCALE GENOMIC DNA]</scope>
    <source>
        <strain>G9842</strain>
    </source>
</reference>
<name>UNG_BACC2</name>
<comment type="function">
    <text evidence="1">Excises uracil residues from the DNA which can arise as a result of misincorporation of dUMP residues by DNA polymerase or due to deamination of cytosine.</text>
</comment>
<comment type="catalytic activity">
    <reaction evidence="1">
        <text>Hydrolyzes single-stranded DNA or mismatched double-stranded DNA and polynucleotides, releasing free uracil.</text>
        <dbReference type="EC" id="3.2.2.27"/>
    </reaction>
</comment>
<comment type="subcellular location">
    <subcellularLocation>
        <location evidence="1">Cytoplasm</location>
    </subcellularLocation>
</comment>
<comment type="similarity">
    <text evidence="1">Belongs to the uracil-DNA glycosylase (UDG) superfamily. UNG family.</text>
</comment>
<sequence>MENVLRNDWGPLLAPEFEKEYYLTLSSFLTEEYSTHVVYPKVEDIFNALQYTSYENTKVVILGQDPYHGPNQAHGLSFSVQPGVKTPPSLLNMYKELRDEYGYEIPNNGYLVKWAEQGVLLLNTVLTVRQSEANSHKGKGWEHFTDRVIQLLNEREKPVIFILWGRHAQAKKKLITNPNHHIIESVHPSPLSARRGFFGSKPYSKVNTILANMGEREIDWEIPNL</sequence>
<dbReference type="EC" id="3.2.2.27" evidence="1"/>
<dbReference type="EMBL" id="CP001186">
    <property type="protein sequence ID" value="ACK94524.1"/>
    <property type="molecule type" value="Genomic_DNA"/>
</dbReference>
<dbReference type="RefSeq" id="WP_000432545.1">
    <property type="nucleotide sequence ID" value="NC_011772.1"/>
</dbReference>
<dbReference type="SMR" id="B7IRS8"/>
<dbReference type="KEGG" id="bcg:BCG9842_B5430"/>
<dbReference type="HOGENOM" id="CLU_032162_3_0_9"/>
<dbReference type="Proteomes" id="UP000006744">
    <property type="component" value="Chromosome"/>
</dbReference>
<dbReference type="GO" id="GO:0005737">
    <property type="term" value="C:cytoplasm"/>
    <property type="evidence" value="ECO:0007669"/>
    <property type="project" value="UniProtKB-SubCell"/>
</dbReference>
<dbReference type="GO" id="GO:0004844">
    <property type="term" value="F:uracil DNA N-glycosylase activity"/>
    <property type="evidence" value="ECO:0007669"/>
    <property type="project" value="UniProtKB-UniRule"/>
</dbReference>
<dbReference type="GO" id="GO:0097510">
    <property type="term" value="P:base-excision repair, AP site formation via deaminated base removal"/>
    <property type="evidence" value="ECO:0007669"/>
    <property type="project" value="TreeGrafter"/>
</dbReference>
<dbReference type="CDD" id="cd10027">
    <property type="entry name" value="UDG-F1-like"/>
    <property type="match status" value="1"/>
</dbReference>
<dbReference type="FunFam" id="3.40.470.10:FF:000001">
    <property type="entry name" value="Uracil-DNA glycosylase"/>
    <property type="match status" value="1"/>
</dbReference>
<dbReference type="Gene3D" id="3.40.470.10">
    <property type="entry name" value="Uracil-DNA glycosylase-like domain"/>
    <property type="match status" value="1"/>
</dbReference>
<dbReference type="HAMAP" id="MF_00148">
    <property type="entry name" value="UDG"/>
    <property type="match status" value="1"/>
</dbReference>
<dbReference type="InterPro" id="IPR002043">
    <property type="entry name" value="UDG_fam1"/>
</dbReference>
<dbReference type="InterPro" id="IPR018085">
    <property type="entry name" value="Ura-DNA_Glyclase_AS"/>
</dbReference>
<dbReference type="InterPro" id="IPR005122">
    <property type="entry name" value="Uracil-DNA_glycosylase-like"/>
</dbReference>
<dbReference type="InterPro" id="IPR036895">
    <property type="entry name" value="Uracil-DNA_glycosylase-like_sf"/>
</dbReference>
<dbReference type="NCBIfam" id="NF003588">
    <property type="entry name" value="PRK05254.1-1"/>
    <property type="match status" value="1"/>
</dbReference>
<dbReference type="NCBIfam" id="NF003589">
    <property type="entry name" value="PRK05254.1-2"/>
    <property type="match status" value="1"/>
</dbReference>
<dbReference type="NCBIfam" id="NF003591">
    <property type="entry name" value="PRK05254.1-4"/>
    <property type="match status" value="1"/>
</dbReference>
<dbReference type="NCBIfam" id="NF003592">
    <property type="entry name" value="PRK05254.1-5"/>
    <property type="match status" value="1"/>
</dbReference>
<dbReference type="NCBIfam" id="TIGR00628">
    <property type="entry name" value="ung"/>
    <property type="match status" value="1"/>
</dbReference>
<dbReference type="PANTHER" id="PTHR11264">
    <property type="entry name" value="URACIL-DNA GLYCOSYLASE"/>
    <property type="match status" value="1"/>
</dbReference>
<dbReference type="PANTHER" id="PTHR11264:SF0">
    <property type="entry name" value="URACIL-DNA GLYCOSYLASE"/>
    <property type="match status" value="1"/>
</dbReference>
<dbReference type="Pfam" id="PF03167">
    <property type="entry name" value="UDG"/>
    <property type="match status" value="1"/>
</dbReference>
<dbReference type="SMART" id="SM00986">
    <property type="entry name" value="UDG"/>
    <property type="match status" value="1"/>
</dbReference>
<dbReference type="SMART" id="SM00987">
    <property type="entry name" value="UreE_C"/>
    <property type="match status" value="1"/>
</dbReference>
<dbReference type="SUPFAM" id="SSF52141">
    <property type="entry name" value="Uracil-DNA glycosylase-like"/>
    <property type="match status" value="1"/>
</dbReference>
<dbReference type="PROSITE" id="PS00130">
    <property type="entry name" value="U_DNA_GLYCOSYLASE"/>
    <property type="match status" value="1"/>
</dbReference>